<reference key="1">
    <citation type="journal article" date="2005" name="J. Bacteriol.">
        <title>Whole-genome sequencing of Staphylococcus haemolyticus uncovers the extreme plasticity of its genome and the evolution of human-colonizing staphylococcal species.</title>
        <authorList>
            <person name="Takeuchi F."/>
            <person name="Watanabe S."/>
            <person name="Baba T."/>
            <person name="Yuzawa H."/>
            <person name="Ito T."/>
            <person name="Morimoto Y."/>
            <person name="Kuroda M."/>
            <person name="Cui L."/>
            <person name="Takahashi M."/>
            <person name="Ankai A."/>
            <person name="Baba S."/>
            <person name="Fukui S."/>
            <person name="Lee J.C."/>
            <person name="Hiramatsu K."/>
        </authorList>
    </citation>
    <scope>NUCLEOTIDE SEQUENCE [LARGE SCALE GENOMIC DNA]</scope>
    <source>
        <strain>JCSC1435</strain>
    </source>
</reference>
<name>EX7S_STAHJ</name>
<evidence type="ECO:0000255" key="1">
    <source>
        <dbReference type="HAMAP-Rule" id="MF_00337"/>
    </source>
</evidence>
<dbReference type="EC" id="3.1.11.6" evidence="1"/>
<dbReference type="EMBL" id="AP006716">
    <property type="protein sequence ID" value="BAE04702.1"/>
    <property type="molecule type" value="Genomic_DNA"/>
</dbReference>
<dbReference type="RefSeq" id="WP_011275689.1">
    <property type="nucleotide sequence ID" value="NC_007168.1"/>
</dbReference>
<dbReference type="SMR" id="Q4L6M3"/>
<dbReference type="KEGG" id="sha:SH1393"/>
<dbReference type="eggNOG" id="COG1722">
    <property type="taxonomic scope" value="Bacteria"/>
</dbReference>
<dbReference type="HOGENOM" id="CLU_145918_3_2_9"/>
<dbReference type="OrthoDB" id="9798666at2"/>
<dbReference type="Proteomes" id="UP000000543">
    <property type="component" value="Chromosome"/>
</dbReference>
<dbReference type="GO" id="GO:0005829">
    <property type="term" value="C:cytosol"/>
    <property type="evidence" value="ECO:0007669"/>
    <property type="project" value="TreeGrafter"/>
</dbReference>
<dbReference type="GO" id="GO:0009318">
    <property type="term" value="C:exodeoxyribonuclease VII complex"/>
    <property type="evidence" value="ECO:0007669"/>
    <property type="project" value="InterPro"/>
</dbReference>
<dbReference type="GO" id="GO:0008855">
    <property type="term" value="F:exodeoxyribonuclease VII activity"/>
    <property type="evidence" value="ECO:0007669"/>
    <property type="project" value="UniProtKB-UniRule"/>
</dbReference>
<dbReference type="GO" id="GO:0006308">
    <property type="term" value="P:DNA catabolic process"/>
    <property type="evidence" value="ECO:0007669"/>
    <property type="project" value="UniProtKB-UniRule"/>
</dbReference>
<dbReference type="Gene3D" id="1.10.287.1040">
    <property type="entry name" value="Exonuclease VII, small subunit"/>
    <property type="match status" value="1"/>
</dbReference>
<dbReference type="HAMAP" id="MF_00337">
    <property type="entry name" value="Exonuc_7_S"/>
    <property type="match status" value="1"/>
</dbReference>
<dbReference type="InterPro" id="IPR003761">
    <property type="entry name" value="Exonuc_VII_S"/>
</dbReference>
<dbReference type="InterPro" id="IPR037004">
    <property type="entry name" value="Exonuc_VII_ssu_sf"/>
</dbReference>
<dbReference type="NCBIfam" id="NF002140">
    <property type="entry name" value="PRK00977.1-4"/>
    <property type="match status" value="1"/>
</dbReference>
<dbReference type="NCBIfam" id="NF010671">
    <property type="entry name" value="PRK14068.1"/>
    <property type="match status" value="1"/>
</dbReference>
<dbReference type="NCBIfam" id="TIGR01280">
    <property type="entry name" value="xseB"/>
    <property type="match status" value="1"/>
</dbReference>
<dbReference type="PANTHER" id="PTHR34137">
    <property type="entry name" value="EXODEOXYRIBONUCLEASE 7 SMALL SUBUNIT"/>
    <property type="match status" value="1"/>
</dbReference>
<dbReference type="PANTHER" id="PTHR34137:SF1">
    <property type="entry name" value="EXODEOXYRIBONUCLEASE 7 SMALL SUBUNIT"/>
    <property type="match status" value="1"/>
</dbReference>
<dbReference type="Pfam" id="PF02609">
    <property type="entry name" value="Exonuc_VII_S"/>
    <property type="match status" value="1"/>
</dbReference>
<dbReference type="PIRSF" id="PIRSF006488">
    <property type="entry name" value="Exonuc_VII_S"/>
    <property type="match status" value="1"/>
</dbReference>
<dbReference type="SUPFAM" id="SSF116842">
    <property type="entry name" value="XseB-like"/>
    <property type="match status" value="1"/>
</dbReference>
<protein>
    <recommendedName>
        <fullName evidence="1">Exodeoxyribonuclease 7 small subunit</fullName>
        <ecNumber evidence="1">3.1.11.6</ecNumber>
    </recommendedName>
    <alternativeName>
        <fullName evidence="1">Exodeoxyribonuclease VII small subunit</fullName>
        <shortName evidence="1">Exonuclease VII small subunit</shortName>
    </alternativeName>
</protein>
<sequence>MSKDQQSFEEMMQELENIVQKLDNETVSLEESLELYQRGMKLSATCDATLKDAEKKVNQLIKDEAEDEENGKEVNE</sequence>
<gene>
    <name evidence="1" type="primary">xseB</name>
    <name type="ordered locus">SH1393</name>
</gene>
<proteinExistence type="inferred from homology"/>
<organism>
    <name type="scientific">Staphylococcus haemolyticus (strain JCSC1435)</name>
    <dbReference type="NCBI Taxonomy" id="279808"/>
    <lineage>
        <taxon>Bacteria</taxon>
        <taxon>Bacillati</taxon>
        <taxon>Bacillota</taxon>
        <taxon>Bacilli</taxon>
        <taxon>Bacillales</taxon>
        <taxon>Staphylococcaceae</taxon>
        <taxon>Staphylococcus</taxon>
    </lineage>
</organism>
<feature type="chain" id="PRO_0000303753" description="Exodeoxyribonuclease 7 small subunit">
    <location>
        <begin position="1"/>
        <end position="76"/>
    </location>
</feature>
<accession>Q4L6M3</accession>
<keyword id="KW-0963">Cytoplasm</keyword>
<keyword id="KW-0269">Exonuclease</keyword>
<keyword id="KW-0378">Hydrolase</keyword>
<keyword id="KW-0540">Nuclease</keyword>
<comment type="function">
    <text evidence="1">Bidirectionally degrades single-stranded DNA into large acid-insoluble oligonucleotides, which are then degraded further into small acid-soluble oligonucleotides.</text>
</comment>
<comment type="catalytic activity">
    <reaction evidence="1">
        <text>Exonucleolytic cleavage in either 5'- to 3'- or 3'- to 5'-direction to yield nucleoside 5'-phosphates.</text>
        <dbReference type="EC" id="3.1.11.6"/>
    </reaction>
</comment>
<comment type="subunit">
    <text evidence="1">Heterooligomer composed of large and small subunits.</text>
</comment>
<comment type="subcellular location">
    <subcellularLocation>
        <location evidence="1">Cytoplasm</location>
    </subcellularLocation>
</comment>
<comment type="similarity">
    <text evidence="1">Belongs to the XseB family.</text>
</comment>